<sequence>MSDLRKIIGLSSVLAVGFMLVILSCALFKNWYPLLIVIPFILAPLPNLLTKKYSTSHDFLQEEDRNLLDFGRFTFGATICTGFALPIVFVNVGLIGTAAATMSCVGGSIIFLVITLYSQAFVQHEEEF</sequence>
<organism>
    <name type="scientific">Schizosaccharomyces pombe (strain 972 / ATCC 24843)</name>
    <name type="common">Fission yeast</name>
    <dbReference type="NCBI Taxonomy" id="284812"/>
    <lineage>
        <taxon>Eukaryota</taxon>
        <taxon>Fungi</taxon>
        <taxon>Dikarya</taxon>
        <taxon>Ascomycota</taxon>
        <taxon>Taphrinomycotina</taxon>
        <taxon>Schizosaccharomycetes</taxon>
        <taxon>Schizosaccharomycetales</taxon>
        <taxon>Schizosaccharomycetaceae</taxon>
        <taxon>Schizosaccharomyces</taxon>
    </lineage>
</organism>
<accession>Q9UUH1</accession>
<protein>
    <recommendedName>
        <fullName>Vacuolar protein sorting-associated protein 55</fullName>
    </recommendedName>
</protein>
<keyword id="KW-0967">Endosome</keyword>
<keyword id="KW-0333">Golgi apparatus</keyword>
<keyword id="KW-0472">Membrane</keyword>
<keyword id="KW-0653">Protein transport</keyword>
<keyword id="KW-1185">Reference proteome</keyword>
<keyword id="KW-0812">Transmembrane</keyword>
<keyword id="KW-1133">Transmembrane helix</keyword>
<keyword id="KW-0813">Transport</keyword>
<gene>
    <name type="primary">vps55</name>
    <name type="ORF">SPAC630.11</name>
</gene>
<name>VPS55_SCHPO</name>
<evidence type="ECO:0000250" key="1"/>
<evidence type="ECO:0000255" key="2"/>
<evidence type="ECO:0000269" key="3">
    <source>
    </source>
</evidence>
<evidence type="ECO:0000305" key="4"/>
<comment type="function">
    <text evidence="1">Involved in protein transport from endosomes to the vacuole.</text>
</comment>
<comment type="subcellular location">
    <subcellularLocation>
        <location evidence="3">Endosome membrane</location>
        <topology evidence="3">Multi-pass membrane protein</topology>
    </subcellularLocation>
    <subcellularLocation>
        <location evidence="3">Golgi apparatus membrane</location>
        <topology evidence="3">Multi-pass membrane protein</topology>
    </subcellularLocation>
</comment>
<comment type="similarity">
    <text evidence="4">Belongs to the OB-RGRP/VPS55 family.</text>
</comment>
<proteinExistence type="inferred from homology"/>
<dbReference type="EMBL" id="CU329670">
    <property type="protein sequence ID" value="CAB52733.2"/>
    <property type="molecule type" value="Genomic_DNA"/>
</dbReference>
<dbReference type="PIR" id="T38989">
    <property type="entry name" value="T38989"/>
</dbReference>
<dbReference type="RefSeq" id="NP_592907.2">
    <property type="nucleotide sequence ID" value="NM_001018307.3"/>
</dbReference>
<dbReference type="BioGRID" id="279675">
    <property type="interactions" value="3"/>
</dbReference>
<dbReference type="FunCoup" id="Q9UUH1">
    <property type="interactions" value="344"/>
</dbReference>
<dbReference type="STRING" id="284812.Q9UUH1"/>
<dbReference type="PaxDb" id="4896-SPAC630.11.1"/>
<dbReference type="EnsemblFungi" id="SPAC630.11.1">
    <property type="protein sequence ID" value="SPAC630.11.1:pep"/>
    <property type="gene ID" value="SPAC630.11"/>
</dbReference>
<dbReference type="GeneID" id="2543247"/>
<dbReference type="KEGG" id="spo:2543247"/>
<dbReference type="PomBase" id="SPAC630.11">
    <property type="gene designation" value="vps55"/>
</dbReference>
<dbReference type="VEuPathDB" id="FungiDB:SPAC630.11"/>
<dbReference type="eggNOG" id="KOG2174">
    <property type="taxonomic scope" value="Eukaryota"/>
</dbReference>
<dbReference type="HOGENOM" id="CLU_134810_0_1_1"/>
<dbReference type="InParanoid" id="Q9UUH1"/>
<dbReference type="OMA" id="ICARCAN"/>
<dbReference type="PhylomeDB" id="Q9UUH1"/>
<dbReference type="PRO" id="PR:Q9UUH1"/>
<dbReference type="Proteomes" id="UP000002485">
    <property type="component" value="Chromosome I"/>
</dbReference>
<dbReference type="GO" id="GO:0005768">
    <property type="term" value="C:endosome"/>
    <property type="evidence" value="ECO:0000318"/>
    <property type="project" value="GO_Central"/>
</dbReference>
<dbReference type="GO" id="GO:0000329">
    <property type="term" value="C:fungal-type vacuole membrane"/>
    <property type="evidence" value="ECO:0007005"/>
    <property type="project" value="PomBase"/>
</dbReference>
<dbReference type="GO" id="GO:0005794">
    <property type="term" value="C:Golgi apparatus"/>
    <property type="evidence" value="ECO:0007005"/>
    <property type="project" value="PomBase"/>
</dbReference>
<dbReference type="GO" id="GO:0000139">
    <property type="term" value="C:Golgi membrane"/>
    <property type="evidence" value="ECO:0007669"/>
    <property type="project" value="UniProtKB-SubCell"/>
</dbReference>
<dbReference type="GO" id="GO:0005770">
    <property type="term" value="C:late endosome"/>
    <property type="evidence" value="ECO:0000266"/>
    <property type="project" value="PomBase"/>
</dbReference>
<dbReference type="GO" id="GO:0034424">
    <property type="term" value="C:Vps55/Vps68 complex"/>
    <property type="evidence" value="ECO:0000318"/>
    <property type="project" value="GO_Central"/>
</dbReference>
<dbReference type="GO" id="GO:0032511">
    <property type="term" value="P:late endosome to vacuole transport via multivesicular body sorting pathway"/>
    <property type="evidence" value="ECO:0000318"/>
    <property type="project" value="GO_Central"/>
</dbReference>
<dbReference type="GO" id="GO:0015031">
    <property type="term" value="P:protein transport"/>
    <property type="evidence" value="ECO:0007669"/>
    <property type="project" value="UniProtKB-KW"/>
</dbReference>
<dbReference type="InterPro" id="IPR007262">
    <property type="entry name" value="Vps55/LEPROT"/>
</dbReference>
<dbReference type="PANTHER" id="PTHR12050">
    <property type="entry name" value="LEPTIN RECEPTOR-RELATED"/>
    <property type="match status" value="1"/>
</dbReference>
<dbReference type="PANTHER" id="PTHR12050:SF0">
    <property type="entry name" value="RH04491P"/>
    <property type="match status" value="1"/>
</dbReference>
<dbReference type="Pfam" id="PF04133">
    <property type="entry name" value="Vps55"/>
    <property type="match status" value="1"/>
</dbReference>
<feature type="chain" id="PRO_0000316619" description="Vacuolar protein sorting-associated protein 55">
    <location>
        <begin position="1"/>
        <end position="128"/>
    </location>
</feature>
<feature type="topological domain" description="Cytoplasmic" evidence="2">
    <location>
        <begin position="1"/>
        <end position="6"/>
    </location>
</feature>
<feature type="transmembrane region" description="Helical" evidence="2">
    <location>
        <begin position="7"/>
        <end position="27"/>
    </location>
</feature>
<feature type="topological domain" description="Lumenal" evidence="2">
    <location>
        <begin position="28"/>
        <end position="29"/>
    </location>
</feature>
<feature type="transmembrane region" description="Helical" evidence="2">
    <location>
        <begin position="30"/>
        <end position="50"/>
    </location>
</feature>
<feature type="topological domain" description="Cytoplasmic" evidence="2">
    <location>
        <begin position="51"/>
        <end position="72"/>
    </location>
</feature>
<feature type="transmembrane region" description="Helical" evidence="2">
    <location>
        <begin position="73"/>
        <end position="95"/>
    </location>
</feature>
<feature type="topological domain" description="Lumenal" evidence="2">
    <location>
        <begin position="96"/>
        <end position="98"/>
    </location>
</feature>
<feature type="transmembrane region" description="Helical" evidence="2">
    <location>
        <begin position="99"/>
        <end position="121"/>
    </location>
</feature>
<feature type="topological domain" description="Cytoplasmic" evidence="2">
    <location>
        <begin position="122"/>
        <end position="128"/>
    </location>
</feature>
<reference key="1">
    <citation type="journal article" date="2002" name="Nature">
        <title>The genome sequence of Schizosaccharomyces pombe.</title>
        <authorList>
            <person name="Wood V."/>
            <person name="Gwilliam R."/>
            <person name="Rajandream M.A."/>
            <person name="Lyne M.H."/>
            <person name="Lyne R."/>
            <person name="Stewart A."/>
            <person name="Sgouros J.G."/>
            <person name="Peat N."/>
            <person name="Hayles J."/>
            <person name="Baker S.G."/>
            <person name="Basham D."/>
            <person name="Bowman S."/>
            <person name="Brooks K."/>
            <person name="Brown D."/>
            <person name="Brown S."/>
            <person name="Chillingworth T."/>
            <person name="Churcher C.M."/>
            <person name="Collins M."/>
            <person name="Connor R."/>
            <person name="Cronin A."/>
            <person name="Davis P."/>
            <person name="Feltwell T."/>
            <person name="Fraser A."/>
            <person name="Gentles S."/>
            <person name="Goble A."/>
            <person name="Hamlin N."/>
            <person name="Harris D.E."/>
            <person name="Hidalgo J."/>
            <person name="Hodgson G."/>
            <person name="Holroyd S."/>
            <person name="Hornsby T."/>
            <person name="Howarth S."/>
            <person name="Huckle E.J."/>
            <person name="Hunt S."/>
            <person name="Jagels K."/>
            <person name="James K.D."/>
            <person name="Jones L."/>
            <person name="Jones M."/>
            <person name="Leather S."/>
            <person name="McDonald S."/>
            <person name="McLean J."/>
            <person name="Mooney P."/>
            <person name="Moule S."/>
            <person name="Mungall K.L."/>
            <person name="Murphy L.D."/>
            <person name="Niblett D."/>
            <person name="Odell C."/>
            <person name="Oliver K."/>
            <person name="O'Neil S."/>
            <person name="Pearson D."/>
            <person name="Quail M.A."/>
            <person name="Rabbinowitsch E."/>
            <person name="Rutherford K.M."/>
            <person name="Rutter S."/>
            <person name="Saunders D."/>
            <person name="Seeger K."/>
            <person name="Sharp S."/>
            <person name="Skelton J."/>
            <person name="Simmonds M.N."/>
            <person name="Squares R."/>
            <person name="Squares S."/>
            <person name="Stevens K."/>
            <person name="Taylor K."/>
            <person name="Taylor R.G."/>
            <person name="Tivey A."/>
            <person name="Walsh S.V."/>
            <person name="Warren T."/>
            <person name="Whitehead S."/>
            <person name="Woodward J.R."/>
            <person name="Volckaert G."/>
            <person name="Aert R."/>
            <person name="Robben J."/>
            <person name="Grymonprez B."/>
            <person name="Weltjens I."/>
            <person name="Vanstreels E."/>
            <person name="Rieger M."/>
            <person name="Schaefer M."/>
            <person name="Mueller-Auer S."/>
            <person name="Gabel C."/>
            <person name="Fuchs M."/>
            <person name="Duesterhoeft A."/>
            <person name="Fritzc C."/>
            <person name="Holzer E."/>
            <person name="Moestl D."/>
            <person name="Hilbert H."/>
            <person name="Borzym K."/>
            <person name="Langer I."/>
            <person name="Beck A."/>
            <person name="Lehrach H."/>
            <person name="Reinhardt R."/>
            <person name="Pohl T.M."/>
            <person name="Eger P."/>
            <person name="Zimmermann W."/>
            <person name="Wedler H."/>
            <person name="Wambutt R."/>
            <person name="Purnelle B."/>
            <person name="Goffeau A."/>
            <person name="Cadieu E."/>
            <person name="Dreano S."/>
            <person name="Gloux S."/>
            <person name="Lelaure V."/>
            <person name="Mottier S."/>
            <person name="Galibert F."/>
            <person name="Aves S.J."/>
            <person name="Xiang Z."/>
            <person name="Hunt C."/>
            <person name="Moore K."/>
            <person name="Hurst S.M."/>
            <person name="Lucas M."/>
            <person name="Rochet M."/>
            <person name="Gaillardin C."/>
            <person name="Tallada V.A."/>
            <person name="Garzon A."/>
            <person name="Thode G."/>
            <person name="Daga R.R."/>
            <person name="Cruzado L."/>
            <person name="Jimenez J."/>
            <person name="Sanchez M."/>
            <person name="del Rey F."/>
            <person name="Benito J."/>
            <person name="Dominguez A."/>
            <person name="Revuelta J.L."/>
            <person name="Moreno S."/>
            <person name="Armstrong J."/>
            <person name="Forsburg S.L."/>
            <person name="Cerutti L."/>
            <person name="Lowe T."/>
            <person name="McCombie W.R."/>
            <person name="Paulsen I."/>
            <person name="Potashkin J."/>
            <person name="Shpakovski G.V."/>
            <person name="Ussery D."/>
            <person name="Barrell B.G."/>
            <person name="Nurse P."/>
        </authorList>
    </citation>
    <scope>NUCLEOTIDE SEQUENCE [LARGE SCALE GENOMIC DNA]</scope>
    <source>
        <strain>972 / ATCC 24843</strain>
    </source>
</reference>
<reference key="2">
    <citation type="journal article" date="2006" name="Nat. Biotechnol.">
        <title>ORFeome cloning and global analysis of protein localization in the fission yeast Schizosaccharomyces pombe.</title>
        <authorList>
            <person name="Matsuyama A."/>
            <person name="Arai R."/>
            <person name="Yashiroda Y."/>
            <person name="Shirai A."/>
            <person name="Kamata A."/>
            <person name="Sekido S."/>
            <person name="Kobayashi Y."/>
            <person name="Hashimoto A."/>
            <person name="Hamamoto M."/>
            <person name="Hiraoka Y."/>
            <person name="Horinouchi S."/>
            <person name="Yoshida M."/>
        </authorList>
    </citation>
    <scope>SUBCELLULAR LOCATION [LARGE SCALE ANALYSIS]</scope>
</reference>